<sequence length="3165" mass="350796">MTDKSIVILSLMVFHSSFINGKTCRRQLVEEWHPQPSSYVVNWTLTENICLDFYRDCWFLGVNTKIDTSGNQAVPQICPLQIQLGDILVISSEPSLQFPEINLMNVSETSFVGCVQNTTTEDQLLFGCRLKGMHTVNSKWLSVGTHYFITVMASGPSPCPLGLRLNVTVKQQFCQESLSSEFCSGHGKCLSEAWSKTYSCHCQPPFSGKYCQELDACSFKPCKNNGSCINKRENWDEQAYECVCHPPFTGKNCSEIIGQCQPHVCFHGNCSNITSNSFICECDEQFSGPFCEVSAKPCVSLLFWKRGICPNSSSAYTYECPKGSSSQNGETDVSEFSLVPCQNGTDCIKISNDVMCICSPIFTDLLCKSIQTSCESFPLRNNATCKKCEKDYPCSCISGFTEKNCEKAIDHCKLLSINCLNEEWCFNIIGRFKYVCIPGCTKNPCWFLKNVYLIHQHLCYCGVTFHGICQDKGPAQFEYVWQLGFAGSEGEKCQGVIDAYFFLAANCTEDATYVNDPEDNNSSCWFPHEGTKEICANGCSCLSEEDSQEYRYLCFLRWAGNMYLENTTDDQENECQHEAVCKDEINRPRCSCSLSYIGRLCVVNVDYCLGNHSISVHGLCLALSHNCNCSGLQRYERNICEIDTEDCKSASCKNGTTSTHLRGYFFRKCVPGFKGTQCEIDIDECASHPCKNGATCIDQPGNYFCQCVPPFKVVDGFSCLCNPGYVGIRCEQDIDDCILNACEHNSTCKDLHLSYQCVCLSDWEGNFCEQESNECKMNPCKNNSTCTDLYKSYRCECTSGWTGQNCSEEINECDSDPCMNGGLCHESTIPGQFVCLCPPLYTGQFCHQRYNLCDLLHNPCRNNSTCLALVDANQHCICREEFEGKNCEIDVKDCLFLSCQDYGDCEDMVNNFRCICRPGFSGSLCEIEINECSSEPCKNNGTCVDLTNRFFCNCEPEYHGPFCELDVNKCKISPCLDEENCVYRTDGYNCLCAPGYTGINCEINLDECLSEPCLHDGVCIDGINHYTCDCKSGFFGTHCETNANDCLSNPCLHGRCTELINEYPCSCDADGTSTQCKIKINDCTSIPCMNEGFCQKSAHGFTCICPRGYTGAYCEKSIDNCAEPELNSVICLNGGICVDGPGHTFDCRCLPGFSGQFCEININECSSSPCLHGADCEDHINGYVCKCQPGWSGHHCENELECIPNSCVHELCMENEPGSTCLCTPGFMTCSIGLLCGDEIRRITCLTPIFQRTDPISTQTYTIPPSETLVSSFPSIKATRIPAIMDTYPVDQGPKQTGIVKHDILPTTGLATLRISTPLESYLLQELIVTRELSAKHSLLSSADVSSSRFLNFGIRDPAQIVQDKTSVSHMPIRTSAATLGFFFPDRRARTPFIMSSLMSDFIFPTQSLLFENCQTVALSATPTTSVIRSIPGADIELNRQSLLSRGFLLIAASISATPVVSRGAQEDIEEYSADSLISRREHWRLLSPSMSPIFPAKVIISKQVTILNSSALHRFSTKAFNPSEYQAITEASSNQRLTNIKSQAADSLRELSQTCATCSMTEIKSSREFSDQVLHSKQSHFYETFWMNSAILASWYALMGAQTITSGHSFSSATEITPSVAFTEVPSLFPSKKSAKRTILSSSLEESITLSSNLDVNLCLDKTCLSIVPSQTISSDLMNSDLTSKMTTDELSVSENILKLLKIRQYGITMGPTEVLNQESLLDMEKSKGSHTLFKLHPSDSSLDFELNLQIYPDVTLKTYSEITHANDFKNNLPPLTGSVPDFSEVTTNVAFYTVSATPALSIQTSSSMSVIRPDWPYFTDYMTSLKKEVKTSSEWSKWELQPSVQYQEFPTASRHLPFTRSLTLSSLESILAPQRLMISDFSCVRYYGDSYLEFQNVALNPQNNISLEFQTFSSYGLLLYVKQDSNLVDGFFIQLFIENGTLKYHFYCPGEAKFKSINTTVRVDNGQKYTLLIRQELDPCNAELTILGRNTQICESINHVLGKPLPKSGSVFIGGFPDLHGKIQMPVPVKNFTGCIEVIEINNWRSFIPSKAVKNYHINNCRSQGFMLSPTASFVDASDVTQGVDTMWTSVSPSVAAPSVCQQDVCHNGGTCHAIFLSSGIVSFQCDCPLHFTGRFCEKDAGLFFPSFNGNSYLELPFLKFVLEKEHNRTVTIYLTIKTNSLNGTILYSNGNNCGKQFLHLFLVEGRPSVKYGCGNSQNILTVSANYSINTNAFTPITIRYTTPVGSPGVVCMIEMTADGKPPVQKKDTEISHASQAYFESMFLGHIPANVQIHKKAGPVYGFRGCILDLQVNNKEFFIIDEARHGKNIENCHVPWCAHHLCRNNGTCISDNENLFCECPRLYSGKLCQFASCENNPCGNGATCVPKSGTDIVCLCPYGRSGPLCTDAINITQPRFSGTDAFGYTSFLAYSRISDISFHYEFHLKFQLANNHSALQNNLIFFTGQKGHGLNGDDFLAVGLLNGSVVYSYNLGSGIASIRSEPLNLSLGVHTVHLGKFFQEGWLKVDDHKNKSIIAPGRLVGLNVFSQFYVGGYSEYTPDLLPNGADFKNGFQGCIFTLQVRTEKDGHFRGLGNPEGHPNAGRSVGQCHASPCSLMKCGNGGTCIESGTSVYCNCTTGWKGSFCTETVSTCDPEHDPPHHCSRGATCISLPHGYTCFCPLGTTGIYCEQALILIVILEKPKPAERKVKKEALSISDPSFRSNELSWMSFASFHVRKKTHIQLQFQPLAADGILFYAAQHLKAQSGDFLCISLVNSSVQLRYNLGDRTIILETLQKVTINGSTWHIIKAGRVGAEGYLDLDGINVTEKASTKMSSLDTNTDFYIGGVSSLNLVNPMAIENEPVGFQGCIRQVIINNQELQLTEFGAKGGSNVGDCDGTACGYNTCRNGGECTVNGTTFSCRCLPDWAGNTCNQSVSCLNNLCLHQSLCIPDQSFSYSCLCTLGWVGRYCENKTSFSTAKFMGNSYIKYIDPNYRMRNLQFTTISLNFSTTKTEGLIVWMGIAQNEENDFLAIGLHNQTLKIAVNLGERISVPMSYNNGTFCCNKWHHVVVIQNQTLIKAYINNSLILSEDIDPHKNFVALNYDGICYLGGFEYGRKVNIVTQEIFKTNFVGKIKDVVFFQEPKNIELIKLEGYNVYDGDEQNEVT</sequence>
<gene>
    <name type="primary">EYS</name>
    <name type="synonym">C6orf178</name>
    <name type="synonym">C6orf179</name>
    <name type="synonym">C6orf180</name>
    <name type="synonym">EGFL10</name>
    <name type="synonym">EGFL11</name>
    <name type="synonym">SPAM</name>
    <name type="ORF">UNQ9424/PRO34591</name>
</gene>
<organism>
    <name type="scientific">Homo sapiens</name>
    <name type="common">Human</name>
    <dbReference type="NCBI Taxonomy" id="9606"/>
    <lineage>
        <taxon>Eukaryota</taxon>
        <taxon>Metazoa</taxon>
        <taxon>Chordata</taxon>
        <taxon>Craniata</taxon>
        <taxon>Vertebrata</taxon>
        <taxon>Euteleostomi</taxon>
        <taxon>Mammalia</taxon>
        <taxon>Eutheria</taxon>
        <taxon>Euarchontoglires</taxon>
        <taxon>Primates</taxon>
        <taxon>Haplorrhini</taxon>
        <taxon>Catarrhini</taxon>
        <taxon>Hominidae</taxon>
        <taxon>Homo</taxon>
    </lineage>
</organism>
<name>EYS_HUMAN</name>
<proteinExistence type="evidence at protein level"/>
<comment type="function">
    <text evidence="3 8">Required to maintain the integrity of photoreceptor cells (PubMed:18836446). Specifically required for normal morphology of the photoreceptor ciliary pocket, and might thus facilitate protein trafficking between the photoreceptor inner and outer segments via the transition zone (By similarity).</text>
</comment>
<comment type="subcellular location">
    <subcellularLocation>
        <location evidence="14">Cell projection</location>
        <location evidence="14">Cilium</location>
        <location evidence="14">Photoreceptor outer segment</location>
    </subcellularLocation>
    <subcellularLocation>
        <location evidence="14 15">Cell projection</location>
        <location evidence="14 15">Cilium</location>
    </subcellularLocation>
    <subcellularLocation>
        <location evidence="15">Cytoplasm</location>
        <location evidence="15">Cytoskeleton</location>
        <location evidence="15">Cilium axoneme</location>
    </subcellularLocation>
    <subcellularLocation>
        <location evidence="15">Cytoplasm</location>
        <location evidence="15">Cytoskeleton</location>
        <location evidence="15">Microtubule organizing center</location>
        <location evidence="15">Centrosome</location>
    </subcellularLocation>
    <subcellularLocation>
        <location evidence="14">Secreted</location>
        <location evidence="14">Extracellular space</location>
        <location evidence="14">Extracellular matrix</location>
        <location evidence="14">Interphotoreceptor matrix</location>
    </subcellularLocation>
    <text evidence="2 14 15">Localizes to discrete puncta at, or adjacent to, the photoreceptor connecting cilium (PubMed:27737822). Highly expressed in cone photoreceptor outer segments (PubMed:27737822). Weakly expressed in rod photoreceptor outer segments (By similarity). May localize to the cilium axoneme (PubMed:27846257). May also be secreted into the interphotoreceptor extracellular matrix (PubMed:27737822).</text>
</comment>
<comment type="alternative products">
    <event type="alternative splicing"/>
    <isoform>
        <id>Q5T1H1-3</id>
        <name evidence="19">4</name>
        <sequence type="displayed"/>
    </isoform>
    <isoform>
        <id>Q5T1H1-1</id>
        <name>1</name>
        <sequence type="described" ref="VSP_036709"/>
    </isoform>
    <isoform>
        <id>Q5T1H1-2</id>
        <name evidence="19">3</name>
        <sequence type="described" ref="VSP_035821 VSP_035822"/>
    </isoform>
    <isoform>
        <id>Q5T1H1-4</id>
        <name evidence="19">2</name>
        <sequence type="described" ref="VSP_047161 VSP_035822"/>
    </isoform>
</comment>
<comment type="tissue specificity">
    <text evidence="8 9 14 15">Expressed in retina (at protein level) (PubMed:18836446, PubMed:18976725, PubMed:27737822, PubMed:27846257). Isoform 1: Detected in retina (PubMed:27846257). Isoform 2: Detected in retina (PubMed:27846257). Isoform 3: Strongly expressed in retina and testis (PubMed:27846257). Isoform 4: Strongly expressed in testis, and weakly expressed in retina (PubMed:27846257).</text>
</comment>
<comment type="disease" evidence="8 9 10 11 12">
    <disease id="DI-00987">
        <name>Retinitis pigmentosa 25</name>
        <acronym>RP25</acronym>
        <description>A retinal dystrophy belonging to the group of pigmentary retinopathies. Retinitis pigmentosa is characterized by retinal pigment deposits visible on fundus examination and primary loss of rod photoreceptor cells followed by secondary loss of cone photoreceptors. Patients typically have night vision blindness and loss of midperipheral visual field. As their condition progresses, they lose their far peripheral visual field and eventually central vision as well.</description>
        <dbReference type="MIM" id="602772"/>
    </disease>
    <text>The disease is caused by variants affecting the gene represented in this entry.</text>
</comment>
<comment type="miscellaneous">
    <text>Although the protein is conserved in Drosophila, the gene encoding the orthologous protein is inactive in rodents.</text>
</comment>
<comment type="similarity">
    <text evidence="20">Belongs to the EYS family.</text>
</comment>
<protein>
    <recommendedName>
        <fullName>Protein eyes shut homolog</fullName>
    </recommendedName>
    <alternativeName>
        <fullName>Epidermal growth factor-like protein 10</fullName>
        <shortName>EGF-like protein 10</shortName>
    </alternativeName>
    <alternativeName>
        <fullName>Epidermal growth factor-like protein 11</fullName>
        <shortName>EGF-like protein 11</shortName>
    </alternativeName>
    <alternativeName>
        <fullName>Protein spacemaker homolog</fullName>
    </alternativeName>
</protein>
<accession>Q5T1H1</accession>
<accession>A2RUR2</accession>
<accession>A8MVE7</accession>
<accession>B7TYK8</accession>
<accession>B7UUQ3</accession>
<accession>B7ZBE7</accession>
<accession>B7ZBE8</accession>
<accession>B7ZBR3</accession>
<accession>B9ZVD2</accession>
<accession>Q5SZM4</accession>
<accession>Q5T3C8</accession>
<accession>Q5T669</accession>
<accession>Q5TEL3</accession>
<accession>Q5TEL4</accession>
<accession>Q5VVG4</accession>
<accession>Q6UY05</accession>
<accession>Q9H557</accession>
<accession>Q9NQ15</accession>
<keyword id="KW-0025">Alternative splicing</keyword>
<keyword id="KW-0106">Calcium</keyword>
<keyword id="KW-0966">Cell projection</keyword>
<keyword id="KW-0963">Cytoplasm</keyword>
<keyword id="KW-0206">Cytoskeleton</keyword>
<keyword id="KW-0225">Disease variant</keyword>
<keyword id="KW-1015">Disulfide bond</keyword>
<keyword id="KW-0245">EGF-like domain</keyword>
<keyword id="KW-0272">Extracellular matrix</keyword>
<keyword id="KW-0325">Glycoprotein</keyword>
<keyword id="KW-1267">Proteomics identification</keyword>
<keyword id="KW-1185">Reference proteome</keyword>
<keyword id="KW-0677">Repeat</keyword>
<keyword id="KW-0682">Retinitis pigmentosa</keyword>
<keyword id="KW-0964">Secreted</keyword>
<keyword id="KW-0716">Sensory transduction</keyword>
<keyword id="KW-0732">Signal</keyword>
<keyword id="KW-0844">Vision</keyword>
<dbReference type="EMBL" id="FM209056">
    <property type="protein sequence ID" value="CAR64275.1"/>
    <property type="molecule type" value="mRNA"/>
</dbReference>
<dbReference type="EMBL" id="FJ416331">
    <property type="protein sequence ID" value="ACJ37365.1"/>
    <property type="molecule type" value="mRNA"/>
</dbReference>
<dbReference type="EMBL" id="AY358133">
    <property type="protein sequence ID" value="AAQ88500.1"/>
    <property type="molecule type" value="mRNA"/>
</dbReference>
<dbReference type="EMBL" id="AL050329">
    <property type="protein sequence ID" value="CAB99359.1"/>
    <property type="molecule type" value="Genomic_DNA"/>
</dbReference>
<dbReference type="EMBL" id="AL078597">
    <property type="status" value="NOT_ANNOTATED_CDS"/>
    <property type="molecule type" value="Genomic_DNA"/>
</dbReference>
<dbReference type="EMBL" id="AL109612">
    <property type="status" value="NOT_ANNOTATED_CDS"/>
    <property type="molecule type" value="Genomic_DNA"/>
</dbReference>
<dbReference type="EMBL" id="AL109922">
    <property type="status" value="NOT_ANNOTATED_CDS"/>
    <property type="molecule type" value="Genomic_DNA"/>
</dbReference>
<dbReference type="EMBL" id="AL132767">
    <property type="status" value="NOT_ANNOTATED_CDS"/>
    <property type="molecule type" value="Genomic_DNA"/>
</dbReference>
<dbReference type="EMBL" id="AL133322">
    <property type="status" value="NOT_ANNOTATED_CDS"/>
    <property type="molecule type" value="Genomic_DNA"/>
</dbReference>
<dbReference type="EMBL" id="AL137007">
    <property type="status" value="NOT_ANNOTATED_CDS"/>
    <property type="molecule type" value="Genomic_DNA"/>
</dbReference>
<dbReference type="EMBL" id="AL353153">
    <property type="status" value="NOT_ANNOTATED_CDS"/>
    <property type="molecule type" value="Genomic_DNA"/>
</dbReference>
<dbReference type="EMBL" id="AL353669">
    <property type="status" value="NOT_ANNOTATED_CDS"/>
    <property type="molecule type" value="Genomic_DNA"/>
</dbReference>
<dbReference type="EMBL" id="AL354719">
    <property type="status" value="NOT_ANNOTATED_CDS"/>
    <property type="molecule type" value="Genomic_DNA"/>
</dbReference>
<dbReference type="EMBL" id="AL354913">
    <property type="status" value="NOT_ANNOTATED_CDS"/>
    <property type="molecule type" value="Genomic_DNA"/>
</dbReference>
<dbReference type="EMBL" id="AL355357">
    <property type="status" value="NOT_ANNOTATED_CDS"/>
    <property type="molecule type" value="Genomic_DNA"/>
</dbReference>
<dbReference type="EMBL" id="AL356454">
    <property type="status" value="NOT_ANNOTATED_CDS"/>
    <property type="molecule type" value="Genomic_DNA"/>
</dbReference>
<dbReference type="EMBL" id="AL357375">
    <property type="status" value="NOT_ANNOTATED_CDS"/>
    <property type="molecule type" value="Genomic_DNA"/>
</dbReference>
<dbReference type="EMBL" id="AL365217">
    <property type="status" value="NOT_ANNOTATED_CDS"/>
    <property type="molecule type" value="Genomic_DNA"/>
</dbReference>
<dbReference type="EMBL" id="AL450319">
    <property type="status" value="NOT_ANNOTATED_CDS"/>
    <property type="molecule type" value="Genomic_DNA"/>
</dbReference>
<dbReference type="EMBL" id="AL450324">
    <property type="status" value="NOT_ANNOTATED_CDS"/>
    <property type="molecule type" value="Genomic_DNA"/>
</dbReference>
<dbReference type="EMBL" id="AL450394">
    <property type="status" value="NOT_ANNOTATED_CDS"/>
    <property type="molecule type" value="Genomic_DNA"/>
</dbReference>
<dbReference type="EMBL" id="AL589916">
    <property type="status" value="NOT_ANNOTATED_CDS"/>
    <property type="molecule type" value="Genomic_DNA"/>
</dbReference>
<dbReference type="EMBL" id="AL590546">
    <property type="status" value="NOT_ANNOTATED_CDS"/>
    <property type="molecule type" value="Genomic_DNA"/>
</dbReference>
<dbReference type="EMBL" id="AL590784">
    <property type="status" value="NOT_ANNOTATED_CDS"/>
    <property type="molecule type" value="Genomic_DNA"/>
</dbReference>
<dbReference type="EMBL" id="AL603767">
    <property type="status" value="NOT_ANNOTATED_CDS"/>
    <property type="molecule type" value="Genomic_DNA"/>
</dbReference>
<dbReference type="EMBL" id="BC133011">
    <property type="protein sequence ID" value="AAI33012.1"/>
    <property type="molecule type" value="mRNA"/>
</dbReference>
<dbReference type="EMBL" id="BC133013">
    <property type="protein sequence ID" value="AAI33014.1"/>
    <property type="molecule type" value="mRNA"/>
</dbReference>
<dbReference type="CCDS" id="CCDS47445.1">
    <molecule id="Q5T1H1-1"/>
</dbReference>
<dbReference type="CCDS" id="CCDS47446.1">
    <molecule id="Q5T1H1-4"/>
</dbReference>
<dbReference type="CCDS" id="CCDS4967.1">
    <molecule id="Q5T1H1-2"/>
</dbReference>
<dbReference type="CCDS" id="CCDS78156.1">
    <molecule id="Q5T1H1-3"/>
</dbReference>
<dbReference type="RefSeq" id="NP_001136272.1">
    <molecule id="Q5T1H1-1"/>
    <property type="nucleotide sequence ID" value="NM_001142800.2"/>
</dbReference>
<dbReference type="RefSeq" id="NP_001136273.1">
    <molecule id="Q5T1H1-4"/>
    <property type="nucleotide sequence ID" value="NM_001142801.2"/>
</dbReference>
<dbReference type="RefSeq" id="NP_001278938.1">
    <molecule id="Q5T1H1-3"/>
    <property type="nucleotide sequence ID" value="NM_001292009.2"/>
</dbReference>
<dbReference type="RefSeq" id="NP_938024.1">
    <molecule id="Q5T1H1-2"/>
    <property type="nucleotide sequence ID" value="NM_198283.2"/>
</dbReference>
<dbReference type="BioGRID" id="131371">
    <property type="interactions" value="3"/>
</dbReference>
<dbReference type="FunCoup" id="Q5T1H1">
    <property type="interactions" value="58"/>
</dbReference>
<dbReference type="IntAct" id="Q5T1H1">
    <property type="interactions" value="1"/>
</dbReference>
<dbReference type="STRING" id="9606.ENSP00000359655"/>
<dbReference type="GlyCosmos" id="Q5T1H1">
    <property type="glycosylation" value="8 sites, No reported glycans"/>
</dbReference>
<dbReference type="GlyGen" id="Q5T1H1">
    <property type="glycosylation" value="10 sites, 1 O-linked glycan (1 site)"/>
</dbReference>
<dbReference type="iPTMnet" id="Q5T1H1"/>
<dbReference type="PhosphoSitePlus" id="Q5T1H1"/>
<dbReference type="BioMuta" id="EYS"/>
<dbReference type="DMDM" id="338817908"/>
<dbReference type="jPOST" id="Q5T1H1"/>
<dbReference type="MassIVE" id="Q5T1H1"/>
<dbReference type="PaxDb" id="9606-ENSP00000424243"/>
<dbReference type="PeptideAtlas" id="Q5T1H1"/>
<dbReference type="ProteomicsDB" id="64092"/>
<dbReference type="ProteomicsDB" id="64263">
    <molecule id="Q5T1H1-3"/>
</dbReference>
<dbReference type="ProteomicsDB" id="64264">
    <molecule id="Q5T1H1-1"/>
</dbReference>
<dbReference type="ProteomicsDB" id="64265">
    <molecule id="Q5T1H1-2"/>
</dbReference>
<dbReference type="Antibodypedia" id="31174">
    <property type="antibodies" value="31 antibodies from 10 providers"/>
</dbReference>
<dbReference type="DNASU" id="346007"/>
<dbReference type="Ensembl" id="ENST00000342421.9">
    <molecule id="Q5T1H1-2"/>
    <property type="protein sequence ID" value="ENSP00000341818.5"/>
    <property type="gene ID" value="ENSG00000188107.15"/>
</dbReference>
<dbReference type="Ensembl" id="ENST00000370621.7">
    <molecule id="Q5T1H1-3"/>
    <property type="protein sequence ID" value="ENSP00000359655.3"/>
    <property type="gene ID" value="ENSG00000188107.15"/>
</dbReference>
<dbReference type="Ensembl" id="ENST00000393380.6">
    <molecule id="Q5T1H1-4"/>
    <property type="protein sequence ID" value="ENSP00000377042.2"/>
    <property type="gene ID" value="ENSG00000188107.15"/>
</dbReference>
<dbReference type="Ensembl" id="ENST00000503581.6">
    <molecule id="Q5T1H1-1"/>
    <property type="protein sequence ID" value="ENSP00000424243.1"/>
    <property type="gene ID" value="ENSG00000188107.15"/>
</dbReference>
<dbReference type="GeneID" id="346007"/>
<dbReference type="KEGG" id="hsa:346007"/>
<dbReference type="MANE-Select" id="ENST00000503581.6">
    <molecule id="Q5T1H1-1"/>
    <property type="protein sequence ID" value="ENSP00000424243.1"/>
    <property type="RefSeq nucleotide sequence ID" value="NM_001142800.2"/>
    <property type="RefSeq protein sequence ID" value="NP_001136272.1"/>
</dbReference>
<dbReference type="UCSC" id="uc003peq.4">
    <molecule id="Q5T1H1-3"/>
    <property type="organism name" value="human"/>
</dbReference>
<dbReference type="AGR" id="HGNC:21555"/>
<dbReference type="CTD" id="346007"/>
<dbReference type="DisGeNET" id="346007"/>
<dbReference type="GeneCards" id="EYS"/>
<dbReference type="GeneReviews" id="EYS"/>
<dbReference type="HGNC" id="HGNC:21555">
    <property type="gene designation" value="EYS"/>
</dbReference>
<dbReference type="HPA" id="ENSG00000188107">
    <property type="expression patterns" value="Tissue enriched (retina)"/>
</dbReference>
<dbReference type="MalaCards" id="EYS"/>
<dbReference type="MIM" id="602772">
    <property type="type" value="phenotype"/>
</dbReference>
<dbReference type="MIM" id="612424">
    <property type="type" value="gene"/>
</dbReference>
<dbReference type="neXtProt" id="NX_Q5T1H1"/>
<dbReference type="OpenTargets" id="ENSG00000188107"/>
<dbReference type="Orphanet" id="791">
    <property type="disease" value="Retinitis pigmentosa"/>
</dbReference>
<dbReference type="PharmGKB" id="PA164719488"/>
<dbReference type="VEuPathDB" id="HostDB:ENSG00000188107"/>
<dbReference type="eggNOG" id="KOG1217">
    <property type="taxonomic scope" value="Eukaryota"/>
</dbReference>
<dbReference type="eggNOG" id="KOG3509">
    <property type="taxonomic scope" value="Eukaryota"/>
</dbReference>
<dbReference type="GeneTree" id="ENSGT00940000163729"/>
<dbReference type="HOGENOM" id="CLU_000393_0_0_1"/>
<dbReference type="InParanoid" id="Q5T1H1"/>
<dbReference type="OMA" id="DVACICM"/>
<dbReference type="OrthoDB" id="5983569at2759"/>
<dbReference type="PAN-GO" id="Q5T1H1">
    <property type="GO annotations" value="0 GO annotations based on evolutionary models"/>
</dbReference>
<dbReference type="PhylomeDB" id="Q5T1H1"/>
<dbReference type="TreeFam" id="TF317565"/>
<dbReference type="PathwayCommons" id="Q5T1H1"/>
<dbReference type="SignaLink" id="Q5T1H1"/>
<dbReference type="BioGRID-ORCS" id="346007">
    <property type="hits" value="19 hits in 1143 CRISPR screens"/>
</dbReference>
<dbReference type="ChiTaRS" id="EYS">
    <property type="organism name" value="human"/>
</dbReference>
<dbReference type="GenomeRNAi" id="346007"/>
<dbReference type="Pharos" id="Q5T1H1">
    <property type="development level" value="Tbio"/>
</dbReference>
<dbReference type="PRO" id="PR:Q5T1H1"/>
<dbReference type="Proteomes" id="UP000005640">
    <property type="component" value="Chromosome 6"/>
</dbReference>
<dbReference type="RNAct" id="Q5T1H1">
    <property type="molecule type" value="protein"/>
</dbReference>
<dbReference type="Bgee" id="ENSG00000188107">
    <property type="expression patterns" value="Expressed in primordial germ cell in gonad and 102 other cell types or tissues"/>
</dbReference>
<dbReference type="ExpressionAtlas" id="Q5T1H1">
    <property type="expression patterns" value="baseline and differential"/>
</dbReference>
<dbReference type="GO" id="GO:0005813">
    <property type="term" value="C:centrosome"/>
    <property type="evidence" value="ECO:0007669"/>
    <property type="project" value="UniProtKB-SubCell"/>
</dbReference>
<dbReference type="GO" id="GO:0005737">
    <property type="term" value="C:cytoplasm"/>
    <property type="evidence" value="ECO:0007669"/>
    <property type="project" value="UniProtKB-KW"/>
</dbReference>
<dbReference type="GO" id="GO:0070062">
    <property type="term" value="C:extracellular exosome"/>
    <property type="evidence" value="ECO:0007005"/>
    <property type="project" value="UniProtKB"/>
</dbReference>
<dbReference type="GO" id="GO:0033165">
    <property type="term" value="C:interphotoreceptor matrix"/>
    <property type="evidence" value="ECO:0007669"/>
    <property type="project" value="UniProtKB-SubCell"/>
</dbReference>
<dbReference type="GO" id="GO:0001750">
    <property type="term" value="C:photoreceptor outer segment"/>
    <property type="evidence" value="ECO:0007669"/>
    <property type="project" value="UniProtKB-SubCell"/>
</dbReference>
<dbReference type="GO" id="GO:0005509">
    <property type="term" value="F:calcium ion binding"/>
    <property type="evidence" value="ECO:0007669"/>
    <property type="project" value="InterPro"/>
</dbReference>
<dbReference type="GO" id="GO:0050908">
    <property type="term" value="P:detection of light stimulus involved in visual perception"/>
    <property type="evidence" value="ECO:0000315"/>
    <property type="project" value="UniProtKB"/>
</dbReference>
<dbReference type="GO" id="GO:0043403">
    <property type="term" value="P:skeletal muscle tissue regeneration"/>
    <property type="evidence" value="ECO:0000315"/>
    <property type="project" value="UniProtKB"/>
</dbReference>
<dbReference type="CDD" id="cd00054">
    <property type="entry name" value="EGF_CA"/>
    <property type="match status" value="13"/>
</dbReference>
<dbReference type="CDD" id="cd00110">
    <property type="entry name" value="LamG"/>
    <property type="match status" value="5"/>
</dbReference>
<dbReference type="FunFam" id="2.10.25.10:FF:000318">
    <property type="entry name" value="Eyes shut homolog"/>
    <property type="match status" value="1"/>
</dbReference>
<dbReference type="FunFam" id="2.10.25.10:FF:000425">
    <property type="entry name" value="Eyes shut homolog"/>
    <property type="match status" value="1"/>
</dbReference>
<dbReference type="FunFam" id="2.10.25.10:FF:000508">
    <property type="entry name" value="Eyes shut homolog"/>
    <property type="match status" value="1"/>
</dbReference>
<dbReference type="FunFam" id="2.10.25.10:FF:000669">
    <property type="entry name" value="Eyes shut homolog"/>
    <property type="match status" value="1"/>
</dbReference>
<dbReference type="FunFam" id="2.10.25.10:FF:000779">
    <property type="entry name" value="Eyes shut homolog"/>
    <property type="match status" value="1"/>
</dbReference>
<dbReference type="FunFam" id="2.60.120.200:FF:000231">
    <property type="entry name" value="Eyes shut homolog"/>
    <property type="match status" value="1"/>
</dbReference>
<dbReference type="FunFam" id="2.10.25.10:FF:000066">
    <property type="entry name" value="FAT atypical cadherin 4"/>
    <property type="match status" value="1"/>
</dbReference>
<dbReference type="FunFam" id="2.10.25.10:FF:000100">
    <property type="entry name" value="neurogenic locus notch homolog protein 3"/>
    <property type="match status" value="1"/>
</dbReference>
<dbReference type="FunFam" id="2.10.25.10:FF:000327">
    <property type="entry name" value="neurogenic locus notch homolog protein 4"/>
    <property type="match status" value="1"/>
</dbReference>
<dbReference type="FunFam" id="2.10.25.10:FF:000122">
    <property type="entry name" value="Protein crumbs homolog 2"/>
    <property type="match status" value="1"/>
</dbReference>
<dbReference type="FunFam" id="2.10.25.10:FF:000591">
    <property type="entry name" value="Protein eyes shut homolog"/>
    <property type="match status" value="1"/>
</dbReference>
<dbReference type="FunFam" id="2.10.25.10:FF:000676">
    <property type="entry name" value="Protein eyes shut homolog"/>
    <property type="match status" value="1"/>
</dbReference>
<dbReference type="FunFam" id="2.10.25.10:FF:000722">
    <property type="entry name" value="Protein eyes shut homolog"/>
    <property type="match status" value="1"/>
</dbReference>
<dbReference type="FunFam" id="2.10.25.10:FF:000747">
    <property type="entry name" value="Protein eyes shut homolog"/>
    <property type="match status" value="1"/>
</dbReference>
<dbReference type="FunFam" id="2.60.120.200:FF:000183">
    <property type="entry name" value="Protein eyes shut homolog"/>
    <property type="match status" value="1"/>
</dbReference>
<dbReference type="FunFam" id="2.60.120.200:FF:000190">
    <property type="entry name" value="Protein eyes shut homolog"/>
    <property type="match status" value="1"/>
</dbReference>
<dbReference type="FunFam" id="2.60.120.200:FF:000210">
    <property type="entry name" value="Protein eyes shut homolog"/>
    <property type="match status" value="1"/>
</dbReference>
<dbReference type="FunFam" id="2.60.120.200:FF:000218">
    <property type="entry name" value="Protein eyes shut homolog"/>
    <property type="match status" value="1"/>
</dbReference>
<dbReference type="FunFam" id="2.10.25.10:FF:000053">
    <property type="entry name" value="Slit guidance ligand 2"/>
    <property type="match status" value="1"/>
</dbReference>
<dbReference type="FunFam" id="2.10.25.10:FF:000006">
    <property type="entry name" value="Versican core protein-like isoform 1"/>
    <property type="match status" value="1"/>
</dbReference>
<dbReference type="Gene3D" id="2.60.120.200">
    <property type="match status" value="5"/>
</dbReference>
<dbReference type="Gene3D" id="2.10.25.10">
    <property type="entry name" value="Laminin"/>
    <property type="match status" value="26"/>
</dbReference>
<dbReference type="InterPro" id="IPR013320">
    <property type="entry name" value="ConA-like_dom_sf"/>
</dbReference>
<dbReference type="InterPro" id="IPR001881">
    <property type="entry name" value="EGF-like_Ca-bd_dom"/>
</dbReference>
<dbReference type="InterPro" id="IPR013032">
    <property type="entry name" value="EGF-like_CS"/>
</dbReference>
<dbReference type="InterPro" id="IPR000742">
    <property type="entry name" value="EGF-like_dom"/>
</dbReference>
<dbReference type="InterPro" id="IPR000152">
    <property type="entry name" value="EGF-type_Asp/Asn_hydroxyl_site"/>
</dbReference>
<dbReference type="InterPro" id="IPR018097">
    <property type="entry name" value="EGF_Ca-bd_CS"/>
</dbReference>
<dbReference type="InterPro" id="IPR009030">
    <property type="entry name" value="Growth_fac_rcpt_cys_sf"/>
</dbReference>
<dbReference type="InterPro" id="IPR001791">
    <property type="entry name" value="Laminin_G"/>
</dbReference>
<dbReference type="PANTHER" id="PTHR12916">
    <property type="entry name" value="CYTOCHROME C OXIDASE POLYPEPTIDE VIC-2"/>
    <property type="match status" value="1"/>
</dbReference>
<dbReference type="PANTHER" id="PTHR12916:SF9">
    <property type="entry name" value="NEUROGENIC LOCUS NOTCH HOMOLOG PROTEIN 1-RELATED"/>
    <property type="match status" value="1"/>
</dbReference>
<dbReference type="Pfam" id="PF00008">
    <property type="entry name" value="EGF"/>
    <property type="match status" value="10"/>
</dbReference>
<dbReference type="Pfam" id="PF12661">
    <property type="entry name" value="hEGF"/>
    <property type="match status" value="4"/>
</dbReference>
<dbReference type="Pfam" id="PF02210">
    <property type="entry name" value="Laminin_G_2"/>
    <property type="match status" value="5"/>
</dbReference>
<dbReference type="SMART" id="SM00181">
    <property type="entry name" value="EGF"/>
    <property type="match status" value="28"/>
</dbReference>
<dbReference type="SMART" id="SM00179">
    <property type="entry name" value="EGF_CA"/>
    <property type="match status" value="20"/>
</dbReference>
<dbReference type="SMART" id="SM00282">
    <property type="entry name" value="LamG"/>
    <property type="match status" value="5"/>
</dbReference>
<dbReference type="SUPFAM" id="SSF49899">
    <property type="entry name" value="Concanavalin A-like lectins/glucanases"/>
    <property type="match status" value="5"/>
</dbReference>
<dbReference type="SUPFAM" id="SSF57196">
    <property type="entry name" value="EGF/Laminin"/>
    <property type="match status" value="12"/>
</dbReference>
<dbReference type="SUPFAM" id="SSF57184">
    <property type="entry name" value="Growth factor receptor domain"/>
    <property type="match status" value="2"/>
</dbReference>
<dbReference type="PROSITE" id="PS00010">
    <property type="entry name" value="ASX_HYDROXYL"/>
    <property type="match status" value="7"/>
</dbReference>
<dbReference type="PROSITE" id="PS00022">
    <property type="entry name" value="EGF_1"/>
    <property type="match status" value="23"/>
</dbReference>
<dbReference type="PROSITE" id="PS01186">
    <property type="entry name" value="EGF_2"/>
    <property type="match status" value="15"/>
</dbReference>
<dbReference type="PROSITE" id="PS50026">
    <property type="entry name" value="EGF_3"/>
    <property type="match status" value="27"/>
</dbReference>
<dbReference type="PROSITE" id="PS01187">
    <property type="entry name" value="EGF_CA"/>
    <property type="match status" value="6"/>
</dbReference>
<dbReference type="PROSITE" id="PS50025">
    <property type="entry name" value="LAM_G_DOMAIN"/>
    <property type="match status" value="5"/>
</dbReference>
<evidence type="ECO:0000250" key="1"/>
<evidence type="ECO:0000250" key="2">
    <source>
        <dbReference type="UniProtKB" id="A0A2K5V015"/>
    </source>
</evidence>
<evidence type="ECO:0000250" key="3">
    <source>
        <dbReference type="UniProtKB" id="B8JI71"/>
    </source>
</evidence>
<evidence type="ECO:0000255" key="4"/>
<evidence type="ECO:0000255" key="5">
    <source>
        <dbReference type="PROSITE-ProRule" id="PRU00076"/>
    </source>
</evidence>
<evidence type="ECO:0000255" key="6">
    <source>
        <dbReference type="PROSITE-ProRule" id="PRU00122"/>
    </source>
</evidence>
<evidence type="ECO:0000269" key="7">
    <source>
    </source>
</evidence>
<evidence type="ECO:0000269" key="8">
    <source>
    </source>
</evidence>
<evidence type="ECO:0000269" key="9">
    <source>
    </source>
</evidence>
<evidence type="ECO:0000269" key="10">
    <source>
    </source>
</evidence>
<evidence type="ECO:0000269" key="11">
    <source>
    </source>
</evidence>
<evidence type="ECO:0000269" key="12">
    <source>
    </source>
</evidence>
<evidence type="ECO:0000269" key="13">
    <source>
    </source>
</evidence>
<evidence type="ECO:0000269" key="14">
    <source>
    </source>
</evidence>
<evidence type="ECO:0000269" key="15">
    <source>
    </source>
</evidence>
<evidence type="ECO:0000303" key="16">
    <source>
    </source>
</evidence>
<evidence type="ECO:0000303" key="17">
    <source>
    </source>
</evidence>
<evidence type="ECO:0000303" key="18">
    <source>
    </source>
</evidence>
<evidence type="ECO:0000303" key="19">
    <source>
    </source>
</evidence>
<evidence type="ECO:0000305" key="20"/>
<reference key="1">
    <citation type="journal article" date="2008" name="Am. J. Hum. Genet.">
        <title>Identification of a 2 Mb human ortholog of Drosophila eyes shut/spacemaker that is mutated in patients with retinitis pigmentosa.</title>
        <authorList>
            <person name="Collin R.W.J."/>
            <person name="Littink K.W."/>
            <person name="Klevering B.J."/>
            <person name="van den Born L.I."/>
            <person name="Koenekoop R.K."/>
            <person name="Zonneveld M.N."/>
            <person name="Blokland E.A.W."/>
            <person name="Strom T.M."/>
            <person name="Hoyng C.B."/>
            <person name="den Hollander A.I."/>
            <person name="Cremers F.P.M."/>
        </authorList>
    </citation>
    <scope>NUCLEOTIDE SEQUENCE [MRNA] (ISOFORM 3)</scope>
    <scope>TISSUE SPECIFICITY</scope>
    <scope>INVOLVEMENT IN RP25</scope>
</reference>
<reference key="2">
    <citation type="journal article" date="2008" name="Nat. Genet.">
        <title>EYS, encoding an ortholog of Drosophila spacemaker, is mutated in autosomal recessive retinitis pigmentosa.</title>
        <authorList>
            <person name="Abd El-Aziz M.M."/>
            <person name="Barragan I."/>
            <person name="O'Driscoll C.A."/>
            <person name="Goodstadt L."/>
            <person name="Prigmore E."/>
            <person name="Borrego S."/>
            <person name="Mena M."/>
            <person name="Pieras J.I."/>
            <person name="El-Ashry M.F."/>
            <person name="Safieh L.A."/>
            <person name="Shah A."/>
            <person name="Cheetham M.E."/>
            <person name="Carter N.P."/>
            <person name="Chakarova C."/>
            <person name="Ponting C.P."/>
            <person name="Bhattacharya S.S."/>
            <person name="Antinolo G."/>
        </authorList>
    </citation>
    <scope>NUCLEOTIDE SEQUENCE [MRNA] (ISOFORM 1)</scope>
    <scope>FUNCTION</scope>
    <scope>SUBCELLULAR LOCATION</scope>
    <scope>TISSUE SPECIFICITY</scope>
    <scope>INVOLVEMENT IN RP25</scope>
</reference>
<reference key="3">
    <citation type="journal article" date="2003" name="Genome Res.">
        <title>The secreted protein discovery initiative (SPDI), a large-scale effort to identify novel human secreted and transmembrane proteins: a bioinformatics assessment.</title>
        <authorList>
            <person name="Clark H.F."/>
            <person name="Gurney A.L."/>
            <person name="Abaya E."/>
            <person name="Baker K."/>
            <person name="Baldwin D.T."/>
            <person name="Brush J."/>
            <person name="Chen J."/>
            <person name="Chow B."/>
            <person name="Chui C."/>
            <person name="Crowley C."/>
            <person name="Currell B."/>
            <person name="Deuel B."/>
            <person name="Dowd P."/>
            <person name="Eaton D."/>
            <person name="Foster J.S."/>
            <person name="Grimaldi C."/>
            <person name="Gu Q."/>
            <person name="Hass P.E."/>
            <person name="Heldens S."/>
            <person name="Huang A."/>
            <person name="Kim H.S."/>
            <person name="Klimowski L."/>
            <person name="Jin Y."/>
            <person name="Johnson S."/>
            <person name="Lee J."/>
            <person name="Lewis L."/>
            <person name="Liao D."/>
            <person name="Mark M.R."/>
            <person name="Robbie E."/>
            <person name="Sanchez C."/>
            <person name="Schoenfeld J."/>
            <person name="Seshagiri S."/>
            <person name="Simmons L."/>
            <person name="Singh J."/>
            <person name="Smith V."/>
            <person name="Stinson J."/>
            <person name="Vagts A."/>
            <person name="Vandlen R.L."/>
            <person name="Watanabe C."/>
            <person name="Wieand D."/>
            <person name="Woods K."/>
            <person name="Xie M.-H."/>
            <person name="Yansura D.G."/>
            <person name="Yi S."/>
            <person name="Yu G."/>
            <person name="Yuan J."/>
            <person name="Zhang M."/>
            <person name="Zhang Z."/>
            <person name="Goddard A.D."/>
            <person name="Wood W.I."/>
            <person name="Godowski P.J."/>
            <person name="Gray A.M."/>
        </authorList>
    </citation>
    <scope>NUCLEOTIDE SEQUENCE [LARGE SCALE MRNA] (ISOFORM 3)</scope>
</reference>
<reference key="4">
    <citation type="journal article" date="2003" name="Nature">
        <title>The DNA sequence and analysis of human chromosome 6.</title>
        <authorList>
            <person name="Mungall A.J."/>
            <person name="Palmer S.A."/>
            <person name="Sims S.K."/>
            <person name="Edwards C.A."/>
            <person name="Ashurst J.L."/>
            <person name="Wilming L."/>
            <person name="Jones M.C."/>
            <person name="Horton R."/>
            <person name="Hunt S.E."/>
            <person name="Scott C.E."/>
            <person name="Gilbert J.G.R."/>
            <person name="Clamp M.E."/>
            <person name="Bethel G."/>
            <person name="Milne S."/>
            <person name="Ainscough R."/>
            <person name="Almeida J.P."/>
            <person name="Ambrose K.D."/>
            <person name="Andrews T.D."/>
            <person name="Ashwell R.I.S."/>
            <person name="Babbage A.K."/>
            <person name="Bagguley C.L."/>
            <person name="Bailey J."/>
            <person name="Banerjee R."/>
            <person name="Barker D.J."/>
            <person name="Barlow K.F."/>
            <person name="Bates K."/>
            <person name="Beare D.M."/>
            <person name="Beasley H."/>
            <person name="Beasley O."/>
            <person name="Bird C.P."/>
            <person name="Blakey S.E."/>
            <person name="Bray-Allen S."/>
            <person name="Brook J."/>
            <person name="Brown A.J."/>
            <person name="Brown J.Y."/>
            <person name="Burford D.C."/>
            <person name="Burrill W."/>
            <person name="Burton J."/>
            <person name="Carder C."/>
            <person name="Carter N.P."/>
            <person name="Chapman J.C."/>
            <person name="Clark S.Y."/>
            <person name="Clark G."/>
            <person name="Clee C.M."/>
            <person name="Clegg S."/>
            <person name="Cobley V."/>
            <person name="Collier R.E."/>
            <person name="Collins J.E."/>
            <person name="Colman L.K."/>
            <person name="Corby N.R."/>
            <person name="Coville G.J."/>
            <person name="Culley K.M."/>
            <person name="Dhami P."/>
            <person name="Davies J."/>
            <person name="Dunn M."/>
            <person name="Earthrowl M.E."/>
            <person name="Ellington A.E."/>
            <person name="Evans K.A."/>
            <person name="Faulkner L."/>
            <person name="Francis M.D."/>
            <person name="Frankish A."/>
            <person name="Frankland J."/>
            <person name="French L."/>
            <person name="Garner P."/>
            <person name="Garnett J."/>
            <person name="Ghori M.J."/>
            <person name="Gilby L.M."/>
            <person name="Gillson C.J."/>
            <person name="Glithero R.J."/>
            <person name="Grafham D.V."/>
            <person name="Grant M."/>
            <person name="Gribble S."/>
            <person name="Griffiths C."/>
            <person name="Griffiths M.N.D."/>
            <person name="Hall R."/>
            <person name="Halls K.S."/>
            <person name="Hammond S."/>
            <person name="Harley J.L."/>
            <person name="Hart E.A."/>
            <person name="Heath P.D."/>
            <person name="Heathcott R."/>
            <person name="Holmes S.J."/>
            <person name="Howden P.J."/>
            <person name="Howe K.L."/>
            <person name="Howell G.R."/>
            <person name="Huckle E."/>
            <person name="Humphray S.J."/>
            <person name="Humphries M.D."/>
            <person name="Hunt A.R."/>
            <person name="Johnson C.M."/>
            <person name="Joy A.A."/>
            <person name="Kay M."/>
            <person name="Keenan S.J."/>
            <person name="Kimberley A.M."/>
            <person name="King A."/>
            <person name="Laird G.K."/>
            <person name="Langford C."/>
            <person name="Lawlor S."/>
            <person name="Leongamornlert D.A."/>
            <person name="Leversha M."/>
            <person name="Lloyd C.R."/>
            <person name="Lloyd D.M."/>
            <person name="Loveland J.E."/>
            <person name="Lovell J."/>
            <person name="Martin S."/>
            <person name="Mashreghi-Mohammadi M."/>
            <person name="Maslen G.L."/>
            <person name="Matthews L."/>
            <person name="McCann O.T."/>
            <person name="McLaren S.J."/>
            <person name="McLay K."/>
            <person name="McMurray A."/>
            <person name="Moore M.J.F."/>
            <person name="Mullikin J.C."/>
            <person name="Niblett D."/>
            <person name="Nickerson T."/>
            <person name="Novik K.L."/>
            <person name="Oliver K."/>
            <person name="Overton-Larty E.K."/>
            <person name="Parker A."/>
            <person name="Patel R."/>
            <person name="Pearce A.V."/>
            <person name="Peck A.I."/>
            <person name="Phillimore B.J.C.T."/>
            <person name="Phillips S."/>
            <person name="Plumb R.W."/>
            <person name="Porter K.M."/>
            <person name="Ramsey Y."/>
            <person name="Ranby S.A."/>
            <person name="Rice C.M."/>
            <person name="Ross M.T."/>
            <person name="Searle S.M."/>
            <person name="Sehra H.K."/>
            <person name="Sheridan E."/>
            <person name="Skuce C.D."/>
            <person name="Smith S."/>
            <person name="Smith M."/>
            <person name="Spraggon L."/>
            <person name="Squares S.L."/>
            <person name="Steward C.A."/>
            <person name="Sycamore N."/>
            <person name="Tamlyn-Hall G."/>
            <person name="Tester J."/>
            <person name="Theaker A.J."/>
            <person name="Thomas D.W."/>
            <person name="Thorpe A."/>
            <person name="Tracey A."/>
            <person name="Tromans A."/>
            <person name="Tubby B."/>
            <person name="Wall M."/>
            <person name="Wallis J.M."/>
            <person name="West A.P."/>
            <person name="White S.S."/>
            <person name="Whitehead S.L."/>
            <person name="Whittaker H."/>
            <person name="Wild A."/>
            <person name="Willey D.J."/>
            <person name="Wilmer T.E."/>
            <person name="Wood J.M."/>
            <person name="Wray P.W."/>
            <person name="Wyatt J.C."/>
            <person name="Young L."/>
            <person name="Younger R.M."/>
            <person name="Bentley D.R."/>
            <person name="Coulson A."/>
            <person name="Durbin R.M."/>
            <person name="Hubbard T."/>
            <person name="Sulston J.E."/>
            <person name="Dunham I."/>
            <person name="Rogers J."/>
            <person name="Beck S."/>
        </authorList>
    </citation>
    <scope>NUCLEOTIDE SEQUENCE [LARGE SCALE GENOMIC DNA]</scope>
</reference>
<reference key="5">
    <citation type="journal article" date="2004" name="Genome Res.">
        <title>The status, quality, and expansion of the NIH full-length cDNA project: the Mammalian Gene Collection (MGC).</title>
        <authorList>
            <consortium name="The MGC Project Team"/>
        </authorList>
    </citation>
    <scope>NUCLEOTIDE SEQUENCE [LARGE SCALE MRNA] (ISOFORM 3)</scope>
    <scope>VARIANT MET-120</scope>
</reference>
<reference key="6">
    <citation type="journal article" date="2010" name="BMC Med. Genet.">
        <title>Identification of a novel homozygous nonsense mutation in EYS in a Chinese family with autosomal recessive retinitis pigmentosa.</title>
        <authorList>
            <person name="Huang Y."/>
            <person name="Zhang J."/>
            <person name="Li C."/>
            <person name="Yang G."/>
            <person name="Liu M."/>
            <person name="Wang Q.K."/>
            <person name="Tang Z."/>
        </authorList>
    </citation>
    <scope>INVOLVEMENT IN RP25</scope>
</reference>
<reference key="7">
    <citation type="journal article" date="2016" name="Biol. Open">
        <title>Eyes shut homolog is required for maintaining the ciliary pocket and survival of photoreceptors in zebrafish.</title>
        <authorList>
            <person name="Yu M."/>
            <person name="Liu Y."/>
            <person name="Li J."/>
            <person name="Natale B.N."/>
            <person name="Cao S."/>
            <person name="Wang D."/>
            <person name="Amack J.D."/>
            <person name="Hu H."/>
        </authorList>
    </citation>
    <scope>SUBCELLULAR LOCATION</scope>
    <scope>TISSUE SPECIFICITY</scope>
</reference>
<reference key="8">
    <citation type="journal article" date="2016" name="PLoS ONE">
        <title>EYS is a protein associated with the ciliary axoneme in rods and cones.</title>
        <authorList>
            <person name="Alfano G."/>
            <person name="Kruczek P.M."/>
            <person name="Shah A.Z."/>
            <person name="Kramarz B."/>
            <person name="Jeffery G."/>
            <person name="Zelhof A.C."/>
            <person name="Bhattacharya S.S."/>
        </authorList>
    </citation>
    <scope>SUBCELLULAR LOCATION</scope>
    <scope>TISSUE SPECIFICITY (ISOFORMS 1; 2; 3 AND 4)</scope>
</reference>
<reference key="9">
    <citation type="journal article" date="2010" name="Hum. Mutat.">
        <title>Mutation spectrum of EYS in Spanish patients with autosomal recessive retinitis pigmentosa.</title>
        <authorList>
            <person name="Barragan I."/>
            <person name="Borrego S."/>
            <person name="Pieras J.I."/>
            <person name="Gonzalez-del Pozo M."/>
            <person name="Santoyo J."/>
            <person name="Ayuso C."/>
            <person name="Baiget M."/>
            <person name="Millan J.M."/>
            <person name="Mena M."/>
            <person name="El-Aziz M.M."/>
            <person name="Audo I."/>
            <person name="Zeitz C."/>
            <person name="Littink K.W."/>
            <person name="Dopazo J."/>
            <person name="Bhattacharya S.S."/>
            <person name="Antinolo G."/>
        </authorList>
    </citation>
    <scope>VARIANTS RP25 SER-745; ARG-1484; VAL-2017; LEU-2211; LYS-2503 AND GLU-2945</scope>
    <scope>VARIANTS PRO-1987; ASP-2040 AND CYS-2556</scope>
</reference>
<reference key="10">
    <citation type="journal article" date="2010" name="Hum. Mutat.">
        <title>EYS is a major gene for rod-cone dystrophies in France.</title>
        <authorList>
            <person name="Audo I."/>
            <person name="Sahel J.-A."/>
            <person name="Mohand-Saied S."/>
            <person name="Lancelot M.-E."/>
            <person name="Antonio A."/>
            <person name="Moskova-Doumanova V."/>
            <person name="Nandrot E.F."/>
            <person name="Doumanov J."/>
            <person name="Barragan I."/>
            <person name="Antinolo G."/>
            <person name="Bhattacharya S.S."/>
            <person name="Zeitz C."/>
        </authorList>
    </citation>
    <scope>VARIANTS RP25 SER-618; SER-745; SER-1110; ARG-1176; PHE-1232; TYR-1682; GLY-1747; MET-1869; TYR-2139; PRO-2189; LEU-2211; THR-2829; TYR-2911 AND GLU-2928</scope>
    <scope>VARIANTS GLN-94; ILE-112; MET-120; LEU-135; PHE-136; ASN-326; ASN-532; LEU-551; ARG-571; SER-631; VAL-641; ILE-834; ARG-938; LYS-1163; VAL-1263; GLU-1325; VAL-1361; GLU-1365; SER-1419; THR-1451; TRP-1515; GLY-1517; VAL-1662; ILE-1664; LEU-1739; PHE-1748; SER-1837; VAL-1873; ILE-1902; GLY-1915; PRO-1987; ALA-1993; VAL-1999; ASP-2040; SER-2151; GLN-2326; CYS-2556; ARG-2599; PRO-2757 AND ILE-2831</scope>
</reference>
<reference key="11">
    <citation type="journal article" date="2016" name="Hum. Mutat.">
        <title>PEX6 is expressed in photoreceptor cilia and mutated in deafblindness with enamel dysplasia and microcephaly.</title>
        <authorList>
            <person name="Zaki M.S."/>
            <person name="Heller R."/>
            <person name="Thoenes M."/>
            <person name="Nuernberg G."/>
            <person name="Stern-Schneider G."/>
            <person name="Nuernberg P."/>
            <person name="Karnati S."/>
            <person name="Swan D."/>
            <person name="Fateen E."/>
            <person name="Nagel-Wolfrum K."/>
            <person name="Mostafa M.I."/>
            <person name="Thiele H."/>
            <person name="Wolfrum U."/>
            <person name="Baumgart-Vogt E."/>
            <person name="Bolz H.J."/>
        </authorList>
    </citation>
    <scope>VARIANT ASP-2040</scope>
</reference>
<feature type="signal peptide" evidence="4">
    <location>
        <begin position="1"/>
        <end position="21"/>
    </location>
</feature>
<feature type="chain" id="PRO_0000337014" description="Protein eyes shut homolog">
    <location>
        <begin position="22"/>
        <end position="3165"/>
    </location>
</feature>
<feature type="domain" description="EGF-like 1" evidence="5">
    <location>
        <begin position="170"/>
        <end position="212"/>
    </location>
</feature>
<feature type="domain" description="EGF-like 2" evidence="5">
    <location>
        <begin position="213"/>
        <end position="254"/>
    </location>
</feature>
<feature type="domain" description="EGF-like 3" evidence="5">
    <location>
        <begin position="256"/>
        <end position="292"/>
    </location>
</feature>
<feature type="domain" description="EGF-like 4" evidence="5">
    <location>
        <begin position="332"/>
        <end position="368"/>
    </location>
</feature>
<feature type="domain" description="EGF-like 5" evidence="5">
    <location>
        <begin position="370"/>
        <end position="406"/>
    </location>
</feature>
<feature type="domain" description="EGF-like 6" evidence="5">
    <location>
        <begin position="567"/>
        <end position="602"/>
    </location>
</feature>
<feature type="domain" description="EGF-like 7" evidence="5">
    <location>
        <begin position="643"/>
        <end position="679"/>
    </location>
</feature>
<feature type="domain" description="EGF-like 8; calcium-binding" evidence="5">
    <location>
        <begin position="681"/>
        <end position="720"/>
    </location>
</feature>
<feature type="domain" description="EGF-like 9; calcium-binding" evidence="5">
    <location>
        <begin position="733"/>
        <end position="769"/>
    </location>
</feature>
<feature type="domain" description="EGF-like 10; calcium-binding" evidence="5">
    <location>
        <begin position="771"/>
        <end position="807"/>
    </location>
</feature>
<feature type="domain" description="EGF-like 11" evidence="5">
    <location>
        <begin position="809"/>
        <end position="847"/>
    </location>
</feature>
<feature type="domain" description="EGF-like 12" evidence="5">
    <location>
        <begin position="849"/>
        <end position="888"/>
    </location>
</feature>
<feature type="domain" description="EGF-like 13" evidence="5">
    <location>
        <begin position="890"/>
        <end position="926"/>
    </location>
</feature>
<feature type="domain" description="EGF-like 14; calcium-binding" evidence="5">
    <location>
        <begin position="928"/>
        <end position="964"/>
    </location>
</feature>
<feature type="domain" description="EGF-like 15" evidence="5">
    <location>
        <begin position="966"/>
        <end position="1002"/>
    </location>
</feature>
<feature type="domain" description="EGF-like 16; calcium-binding" evidence="5">
    <location>
        <begin position="1004"/>
        <end position="1040"/>
    </location>
</feature>
<feature type="domain" description="EGF-like 17" evidence="5">
    <location>
        <begin position="1042"/>
        <end position="1077"/>
    </location>
</feature>
<feature type="domain" description="EGF-like 18" evidence="5">
    <location>
        <begin position="1079"/>
        <end position="1115"/>
    </location>
</feature>
<feature type="domain" description="EGF-like 19" evidence="5">
    <location>
        <begin position="1117"/>
        <end position="1159"/>
    </location>
</feature>
<feature type="domain" description="EGF-like 20; calcium-binding" evidence="5">
    <location>
        <begin position="1161"/>
        <end position="1197"/>
    </location>
</feature>
<feature type="domain" description="Laminin G-like 1" evidence="6">
    <location>
        <begin position="1883"/>
        <end position="2063"/>
    </location>
</feature>
<feature type="domain" description="EGF-like 21" evidence="5">
    <location>
        <begin position="2099"/>
        <end position="2140"/>
    </location>
</feature>
<feature type="domain" description="Laminin G-like 2" evidence="6">
    <location>
        <begin position="2145"/>
        <end position="2339"/>
    </location>
</feature>
<feature type="domain" description="EGF-like 22" evidence="5">
    <location>
        <begin position="2335"/>
        <end position="2368"/>
    </location>
</feature>
<feature type="domain" description="EGF-like 23" evidence="5">
    <location>
        <begin position="2371"/>
        <end position="2408"/>
    </location>
</feature>
<feature type="domain" description="Laminin G-like 3" evidence="6">
    <location>
        <begin position="2419"/>
        <end position="2609"/>
    </location>
</feature>
<feature type="domain" description="EGF-like 24" evidence="5">
    <location>
        <begin position="2610"/>
        <end position="2646"/>
    </location>
</feature>
<feature type="domain" description="EGF-like 25" evidence="5">
    <location>
        <begin position="2648"/>
        <end position="2689"/>
    </location>
</feature>
<feature type="domain" description="Laminin G-like 4" evidence="6">
    <location>
        <begin position="2717"/>
        <end position="2895"/>
    </location>
</feature>
<feature type="domain" description="EGF-like 26" evidence="5">
    <location>
        <begin position="2896"/>
        <end position="2932"/>
    </location>
</feature>
<feature type="domain" description="EGF-like 27" evidence="5">
    <location>
        <begin position="2933"/>
        <end position="2970"/>
    </location>
</feature>
<feature type="domain" description="Laminin G-like 5" evidence="6">
    <location>
        <begin position="2975"/>
        <end position="3165"/>
    </location>
</feature>
<feature type="glycosylation site" description="N-linked (GlcNAc...) asparagine" evidence="4">
    <location>
        <position position="166"/>
    </location>
</feature>
<feature type="glycosylation site" description="N-linked (GlcNAc...) asparagine" evidence="4">
    <location>
        <position position="269"/>
    </location>
</feature>
<feature type="glycosylation site" description="N-linked (GlcNAc...) asparagine" evidence="4">
    <location>
        <position position="272"/>
    </location>
</feature>
<feature type="glycosylation site" description="N-linked (GlcNAc...) asparagine" evidence="4">
    <location>
        <position position="311"/>
    </location>
</feature>
<feature type="glycosylation site" description="N-linked (GlcNAc...) asparagine" evidence="4">
    <location>
        <position position="343"/>
    </location>
</feature>
<feature type="glycosylation site" description="N-linked (GlcNAc...) asparagine" evidence="4">
    <location>
        <position position="506"/>
    </location>
</feature>
<feature type="glycosylation site" description="N-linked (GlcNAc...) asparagine" evidence="4">
    <location>
        <position position="566"/>
    </location>
</feature>
<feature type="glycosylation site" description="N-linked (GlcNAc...) asparagine" evidence="4">
    <location>
        <position position="2170"/>
    </location>
</feature>
<feature type="disulfide bond" evidence="1">
    <location>
        <begin position="174"/>
        <end position="189"/>
    </location>
</feature>
<feature type="disulfide bond" evidence="1">
    <location>
        <begin position="183"/>
        <end position="200"/>
    </location>
</feature>
<feature type="disulfide bond" evidence="1">
    <location>
        <begin position="202"/>
        <end position="211"/>
    </location>
</feature>
<feature type="disulfide bond" evidence="1">
    <location>
        <begin position="217"/>
        <end position="228"/>
    </location>
</feature>
<feature type="disulfide bond" evidence="1">
    <location>
        <begin position="222"/>
        <end position="242"/>
    </location>
</feature>
<feature type="disulfide bond" evidence="1">
    <location>
        <begin position="244"/>
        <end position="253"/>
    </location>
</feature>
<feature type="disulfide bond" evidence="1">
    <location>
        <begin position="260"/>
        <end position="270"/>
    </location>
</feature>
<feature type="disulfide bond" evidence="1">
    <location>
        <begin position="265"/>
        <end position="280"/>
    </location>
</feature>
<feature type="disulfide bond" evidence="1">
    <location>
        <begin position="282"/>
        <end position="291"/>
    </location>
</feature>
<feature type="disulfide bond" evidence="1">
    <location>
        <begin position="341"/>
        <end position="356"/>
    </location>
</feature>
<feature type="disulfide bond" evidence="1">
    <location>
        <begin position="358"/>
        <end position="367"/>
    </location>
</feature>
<feature type="disulfide bond" evidence="1">
    <location>
        <begin position="374"/>
        <end position="385"/>
    </location>
</feature>
<feature type="disulfide bond" evidence="1">
    <location>
        <begin position="396"/>
        <end position="405"/>
    </location>
</feature>
<feature type="disulfide bond" evidence="1">
    <location>
        <begin position="575"/>
        <end position="590"/>
    </location>
</feature>
<feature type="disulfide bond" evidence="1">
    <location>
        <begin position="592"/>
        <end position="601"/>
    </location>
</feature>
<feature type="disulfide bond" evidence="1">
    <location>
        <begin position="669"/>
        <end position="678"/>
    </location>
</feature>
<feature type="disulfide bond" evidence="1">
    <location>
        <begin position="685"/>
        <end position="696"/>
    </location>
</feature>
<feature type="disulfide bond" evidence="1">
    <location>
        <begin position="690"/>
        <end position="705"/>
    </location>
</feature>
<feature type="disulfide bond" evidence="1">
    <location>
        <begin position="707"/>
        <end position="719"/>
    </location>
</feature>
<feature type="disulfide bond" evidence="1">
    <location>
        <begin position="737"/>
        <end position="748"/>
    </location>
</feature>
<feature type="disulfide bond" evidence="1">
    <location>
        <begin position="742"/>
        <end position="757"/>
    </location>
</feature>
<feature type="disulfide bond" evidence="1">
    <location>
        <begin position="759"/>
        <end position="768"/>
    </location>
</feature>
<feature type="disulfide bond" evidence="1">
    <location>
        <begin position="775"/>
        <end position="786"/>
    </location>
</feature>
<feature type="disulfide bond" evidence="1">
    <location>
        <begin position="780"/>
        <end position="795"/>
    </location>
</feature>
<feature type="disulfide bond" evidence="1">
    <location>
        <begin position="797"/>
        <end position="806"/>
    </location>
</feature>
<feature type="disulfide bond" evidence="1">
    <location>
        <begin position="813"/>
        <end position="824"/>
    </location>
</feature>
<feature type="disulfide bond" evidence="1">
    <location>
        <begin position="818"/>
        <end position="835"/>
    </location>
</feature>
<feature type="disulfide bond" evidence="1">
    <location>
        <begin position="837"/>
        <end position="846"/>
    </location>
</feature>
<feature type="disulfide bond" evidence="1">
    <location>
        <begin position="853"/>
        <end position="866"/>
    </location>
</feature>
<feature type="disulfide bond" evidence="1">
    <location>
        <begin position="860"/>
        <end position="876"/>
    </location>
</feature>
<feature type="disulfide bond" evidence="1">
    <location>
        <begin position="878"/>
        <end position="887"/>
    </location>
</feature>
<feature type="disulfide bond" evidence="1">
    <location>
        <begin position="894"/>
        <end position="905"/>
    </location>
</feature>
<feature type="disulfide bond" evidence="1">
    <location>
        <begin position="899"/>
        <end position="914"/>
    </location>
</feature>
<feature type="disulfide bond" evidence="1">
    <location>
        <begin position="916"/>
        <end position="925"/>
    </location>
</feature>
<feature type="disulfide bond" evidence="1">
    <location>
        <begin position="932"/>
        <end position="943"/>
    </location>
</feature>
<feature type="disulfide bond" evidence="1">
    <location>
        <begin position="937"/>
        <end position="952"/>
    </location>
</feature>
<feature type="disulfide bond" evidence="1">
    <location>
        <begin position="954"/>
        <end position="963"/>
    </location>
</feature>
<feature type="disulfide bond" evidence="1">
    <location>
        <begin position="970"/>
        <end position="981"/>
    </location>
</feature>
<feature type="disulfide bond" evidence="1">
    <location>
        <begin position="975"/>
        <end position="990"/>
    </location>
</feature>
<feature type="disulfide bond" evidence="1">
    <location>
        <begin position="992"/>
        <end position="1001"/>
    </location>
</feature>
<feature type="disulfide bond" evidence="1">
    <location>
        <begin position="1008"/>
        <end position="1019"/>
    </location>
</feature>
<feature type="disulfide bond" evidence="1">
    <location>
        <begin position="1013"/>
        <end position="1028"/>
    </location>
</feature>
<feature type="disulfide bond" evidence="1">
    <location>
        <begin position="1030"/>
        <end position="1039"/>
    </location>
</feature>
<feature type="disulfide bond" evidence="1">
    <location>
        <begin position="1046"/>
        <end position="1056"/>
    </location>
</feature>
<feature type="disulfide bond" evidence="1">
    <location>
        <begin position="1051"/>
        <end position="1065"/>
    </location>
</feature>
<feature type="disulfide bond" evidence="1">
    <location>
        <begin position="1067"/>
        <end position="1076"/>
    </location>
</feature>
<feature type="disulfide bond" evidence="1">
    <location>
        <begin position="1083"/>
        <end position="1094"/>
    </location>
</feature>
<feature type="disulfide bond" evidence="1">
    <location>
        <begin position="1088"/>
        <end position="1103"/>
    </location>
</feature>
<feature type="disulfide bond" evidence="1">
    <location>
        <begin position="1105"/>
        <end position="1114"/>
    </location>
</feature>
<feature type="disulfide bond" evidence="1">
    <location>
        <begin position="1121"/>
        <end position="1137"/>
    </location>
</feature>
<feature type="disulfide bond" evidence="1">
    <location>
        <begin position="1131"/>
        <end position="1147"/>
    </location>
</feature>
<feature type="disulfide bond" evidence="1">
    <location>
        <begin position="1149"/>
        <end position="1158"/>
    </location>
</feature>
<feature type="disulfide bond" evidence="1">
    <location>
        <begin position="1165"/>
        <end position="1176"/>
    </location>
</feature>
<feature type="disulfide bond" evidence="1">
    <location>
        <begin position="1170"/>
        <end position="1185"/>
    </location>
</feature>
<feature type="disulfide bond" evidence="1">
    <location>
        <begin position="1187"/>
        <end position="1196"/>
    </location>
</feature>
<feature type="disulfide bond" evidence="1">
    <location>
        <begin position="2037"/>
        <end position="2063"/>
    </location>
</feature>
<feature type="disulfide bond" evidence="1">
    <location>
        <begin position="2103"/>
        <end position="2114"/>
    </location>
</feature>
<feature type="disulfide bond" evidence="1">
    <location>
        <begin position="2108"/>
        <end position="2128"/>
    </location>
</feature>
<feature type="disulfide bond" evidence="1">
    <location>
        <begin position="2130"/>
        <end position="2139"/>
    </location>
</feature>
<feature type="disulfide bond" evidence="1">
    <location>
        <begin position="2339"/>
        <end position="2350"/>
    </location>
</feature>
<feature type="disulfide bond" evidence="1">
    <location>
        <begin position="2344"/>
        <end position="2359"/>
    </location>
</feature>
<feature type="disulfide bond" evidence="1">
    <location>
        <begin position="2375"/>
        <end position="2386"/>
    </location>
</feature>
<feature type="disulfide bond" evidence="1">
    <location>
        <begin position="2380"/>
        <end position="2396"/>
    </location>
</feature>
<feature type="disulfide bond" evidence="1">
    <location>
        <begin position="2398"/>
        <end position="2407"/>
    </location>
</feature>
<feature type="disulfide bond" evidence="1">
    <location>
        <begin position="2576"/>
        <end position="2609"/>
    </location>
</feature>
<feature type="disulfide bond" evidence="1">
    <location>
        <begin position="2614"/>
        <end position="2625"/>
    </location>
</feature>
<feature type="disulfide bond" evidence="1">
    <location>
        <begin position="2619"/>
        <end position="2634"/>
    </location>
</feature>
<feature type="disulfide bond" evidence="1">
    <location>
        <begin position="2636"/>
        <end position="2645"/>
    </location>
</feature>
<feature type="disulfide bond" evidence="1">
    <location>
        <begin position="2652"/>
        <end position="2668"/>
    </location>
</feature>
<feature type="disulfide bond" evidence="1">
    <location>
        <begin position="2662"/>
        <end position="2677"/>
    </location>
</feature>
<feature type="disulfide bond" evidence="1">
    <location>
        <begin position="2679"/>
        <end position="2688"/>
    </location>
</feature>
<feature type="disulfide bond" evidence="1">
    <location>
        <begin position="2868"/>
        <end position="2895"/>
    </location>
</feature>
<feature type="disulfide bond" evidence="1">
    <location>
        <begin position="2900"/>
        <end position="2911"/>
    </location>
</feature>
<feature type="disulfide bond" evidence="1">
    <location>
        <begin position="2905"/>
        <end position="2920"/>
    </location>
</feature>
<feature type="disulfide bond" evidence="1">
    <location>
        <begin position="2922"/>
        <end position="2931"/>
    </location>
</feature>
<feature type="disulfide bond" evidence="1">
    <location>
        <begin position="2937"/>
        <end position="2948"/>
    </location>
</feature>
<feature type="disulfide bond" evidence="1">
    <location>
        <begin position="2942"/>
        <end position="2958"/>
    </location>
</feature>
<feature type="disulfide bond" evidence="1">
    <location>
        <begin position="2960"/>
        <end position="2969"/>
    </location>
</feature>
<feature type="splice variant" id="VSP_047161" description="In isoform 2." evidence="20">
    <original>CSCSL</original>
    <variation>RILNTVIPHQIQQHIERFIQHDQVGFIVRI</variation>
    <location>
        <begin position="590"/>
        <end position="594"/>
    </location>
</feature>
<feature type="splice variant" id="VSP_035821" description="In isoform 3." evidence="16 17">
    <original>CSCSL</original>
    <variation>YLCII</variation>
    <location>
        <begin position="590"/>
        <end position="594"/>
    </location>
</feature>
<feature type="splice variant" id="VSP_035822" description="In isoform 2 and isoform 3." evidence="16 17">
    <location>
        <begin position="595"/>
        <end position="3165"/>
    </location>
</feature>
<feature type="splice variant" id="VSP_036709" description="In isoform 1." evidence="18">
    <location>
        <begin position="2691"/>
        <end position="2711"/>
    </location>
</feature>
<feature type="sequence variant" id="VAR_063437" description="In dbSNP:rs111947397." evidence="10">
    <original>P</original>
    <variation>Q</variation>
    <location>
        <position position="94"/>
    </location>
</feature>
<feature type="sequence variant" id="VAR_063438" description="In dbSNP:rs112609906." evidence="10">
    <original>V</original>
    <variation>I</variation>
    <location>
        <position position="112"/>
    </location>
</feature>
<feature type="sequence variant" id="VAR_035301" description="In dbSNP:rs12193967." evidence="7 10">
    <original>T</original>
    <variation>M</variation>
    <location>
        <position position="120"/>
    </location>
</feature>
<feature type="sequence variant" id="VAR_063439" description="Requires 2 nucleotide substitutions." evidence="10">
    <original>T</original>
    <variation>L</variation>
    <location>
        <position position="135"/>
    </location>
</feature>
<feature type="sequence variant" id="VAR_063440" description="In dbSNP:rs543011021." evidence="10">
    <original>V</original>
    <variation>F</variation>
    <location>
        <position position="136"/>
    </location>
</feature>
<feature type="sequence variant" id="VAR_063441" description="In dbSNP:rs112822256." evidence="10">
    <original>S</original>
    <variation>N</variation>
    <location>
        <position position="326"/>
    </location>
</feature>
<feature type="sequence variant" id="VAR_063442" description="In dbSNP:rs61753611." evidence="10">
    <original>K</original>
    <variation>N</variation>
    <location>
        <position position="532"/>
    </location>
</feature>
<feature type="sequence variant" id="VAR_063443" evidence="10">
    <original>R</original>
    <variation>L</variation>
    <location>
        <position position="551"/>
    </location>
</feature>
<feature type="sequence variant" id="VAR_063444" description="In dbSNP:rs61753610." evidence="10">
    <original>Q</original>
    <variation>R</variation>
    <location>
        <position position="571"/>
    </location>
</feature>
<feature type="sequence variant" id="VAR_063445" description="In RP25; dbSNP:rs142450703." evidence="10">
    <original>G</original>
    <variation>S</variation>
    <location>
        <position position="618"/>
    </location>
</feature>
<feature type="sequence variant" id="VAR_063446" description="In dbSNP:rs9342464." evidence="10">
    <original>G</original>
    <variation>S</variation>
    <location>
        <position position="631"/>
    </location>
</feature>
<feature type="sequence variant" id="VAR_063447" description="In dbSNP:rs17411795." evidence="10">
    <original>E</original>
    <variation>V</variation>
    <location>
        <position position="641"/>
    </location>
</feature>
<feature type="sequence variant" id="VAR_063448" description="In RP25; uncertain significance; dbSNP:rs201652272." evidence="10 12">
    <original>N</original>
    <variation>S</variation>
    <location>
        <position position="745"/>
    </location>
</feature>
<feature type="sequence variant" id="VAR_063449" description="In dbSNP:rs112464110." evidence="10">
    <original>V</original>
    <variation>I</variation>
    <location>
        <position position="834"/>
    </location>
</feature>
<feature type="sequence variant" id="VAR_043561" description="In dbSNP:rs9294631.">
    <original>L</original>
    <variation>P</variation>
    <location>
        <position position="852"/>
    </location>
</feature>
<feature type="sequence variant" id="VAR_063450" description="In dbSNP:rs367857088." evidence="10">
    <original>K</original>
    <variation>R</variation>
    <location>
        <position position="938"/>
    </location>
</feature>
<feature type="sequence variant" id="VAR_063451" description="In RP25; dbSNP:rs143327210." evidence="10">
    <original>T</original>
    <variation>S</variation>
    <location>
        <position position="1110"/>
    </location>
</feature>
<feature type="sequence variant" id="VAR_063452" description="In dbSNP:rs150951106." evidence="10">
    <original>N</original>
    <variation>K</variation>
    <location>
        <position position="1163"/>
    </location>
</feature>
<feature type="sequence variant" id="VAR_063453" description="In RP25." evidence="10">
    <original>C</original>
    <variation>R</variation>
    <location>
        <position position="1176"/>
    </location>
</feature>
<feature type="sequence variant" id="VAR_063454" description="In RP25; dbSNP:rs190009374." evidence="10">
    <original>I</original>
    <variation>F</variation>
    <location>
        <position position="1232"/>
    </location>
</feature>
<feature type="sequence variant" id="VAR_063455" description="In dbSNP:rs17404123." evidence="10">
    <original>I</original>
    <variation>V</variation>
    <location>
        <position position="1263"/>
    </location>
</feature>
<feature type="sequence variant" id="VAR_063456" description="In dbSNP:rs12663622." evidence="10">
    <original>Q</original>
    <variation>E</variation>
    <location>
        <position position="1325"/>
    </location>
</feature>
<feature type="sequence variant" id="VAR_063457" description="In dbSNP:rs17403955." evidence="10">
    <original>I</original>
    <variation>V</variation>
    <location>
        <position position="1361"/>
    </location>
</feature>
<feature type="sequence variant" id="VAR_063458" description="In dbSNP:rs16895519." evidence="10">
    <original>K</original>
    <variation>E</variation>
    <location>
        <position position="1365"/>
    </location>
</feature>
<feature type="sequence variant" id="VAR_063459" description="In dbSNP:rs624851." evidence="10">
    <original>L</original>
    <variation>S</variation>
    <location>
        <position position="1419"/>
    </location>
</feature>
<feature type="sequence variant" id="VAR_063460" description="In dbSNP:rs62415828." evidence="10">
    <original>I</original>
    <variation>T</variation>
    <location>
        <position position="1451"/>
    </location>
</feature>
<feature type="sequence variant" id="VAR_064417" description="In RP25; dbSNP:rs1260400598." evidence="12">
    <original>W</original>
    <variation>R</variation>
    <location>
        <position position="1484"/>
    </location>
</feature>
<feature type="sequence variant" id="VAR_063461" description="In dbSNP:rs62415827." evidence="10">
    <original>R</original>
    <variation>W</variation>
    <location>
        <position position="1515"/>
    </location>
</feature>
<feature type="sequence variant" id="VAR_063462" description="In dbSNP:rs62415826." evidence="10">
    <original>S</original>
    <variation>G</variation>
    <location>
        <position position="1517"/>
    </location>
</feature>
<feature type="sequence variant" id="VAR_063463" description="In dbSNP:rs147641443." evidence="10">
    <original>D</original>
    <variation>V</variation>
    <location>
        <position position="1662"/>
    </location>
</feature>
<feature type="sequence variant" id="VAR_063464" description="In dbSNP:rs561830314." evidence="10">
    <original>T</original>
    <variation>I</variation>
    <location>
        <position position="1664"/>
    </location>
</feature>
<feature type="sequence variant" id="VAR_063465" description="In RP25; dbSNP:rs75831552." evidence="10">
    <original>D</original>
    <variation>Y</variation>
    <location>
        <position position="1682"/>
    </location>
</feature>
<feature type="sequence variant" id="VAR_063466" evidence="10">
    <original>P</original>
    <variation>L</variation>
    <location>
        <position position="1739"/>
    </location>
</feature>
<feature type="sequence variant" id="VAR_063467" description="In RP25; dbSNP:rs535663619." evidence="10">
    <original>E</original>
    <variation>G</variation>
    <location>
        <position position="1747"/>
    </location>
</feature>
<feature type="sequence variant" id="VAR_063468" description="In dbSNP:rs57312007." evidence="10">
    <original>L</original>
    <variation>F</variation>
    <location>
        <position position="1748"/>
    </location>
</feature>
<feature type="sequence variant" id="VAR_063469" description="In dbSNP:rs199689193." evidence="10">
    <original>W</original>
    <variation>S</variation>
    <location>
        <position position="1837"/>
    </location>
</feature>
<feature type="sequence variant" id="VAR_063470" description="In RP25." evidence="10">
    <original>L</original>
    <variation>M</variation>
    <location>
        <position position="1869"/>
    </location>
</feature>
<feature type="sequence variant" id="VAR_063471" description="In dbSNP:rs16895517." evidence="10">
    <original>L</original>
    <variation>V</variation>
    <location>
        <position position="1873"/>
    </location>
</feature>
<feature type="sequence variant" id="VAR_063472" description="In dbSNP:rs9353806." evidence="10">
    <original>N</original>
    <variation>I</variation>
    <location>
        <position position="1902"/>
    </location>
</feature>
<feature type="sequence variant" id="VAR_063473" description="In dbSNP:rs188093810." evidence="10">
    <original>S</original>
    <variation>G</variation>
    <location>
        <position position="1915"/>
    </location>
</feature>
<feature type="sequence variant" id="VAR_063474" description="In dbSNP:rs1278246029." evidence="10 12">
    <original>T</original>
    <variation>P</variation>
    <location>
        <position position="1987"/>
    </location>
</feature>
<feature type="sequence variant" id="VAR_063475" description="In dbSNP:rs115066356." evidence="10">
    <original>T</original>
    <variation>A</variation>
    <location>
        <position position="1993"/>
    </location>
</feature>
<feature type="sequence variant" id="VAR_063476" description="In dbSNP:rs893294562." evidence="10">
    <original>I</original>
    <variation>V</variation>
    <location>
        <position position="1999"/>
    </location>
</feature>
<feature type="sequence variant" id="VAR_064418" description="In RP25; dbSNP:rs868349465." evidence="12">
    <original>G</original>
    <variation>V</variation>
    <location>
        <position position="2017"/>
    </location>
</feature>
<feature type="sequence variant" id="VAR_063477" description="In dbSNP:rs201580493." evidence="10 12 13">
    <original>V</original>
    <variation>D</variation>
    <location>
        <position position="2040"/>
    </location>
</feature>
<feature type="sequence variant" id="VAR_063478" description="In RP25; dbSNP:rs749909863." evidence="10">
    <original>C</original>
    <variation>Y</variation>
    <location>
        <position position="2139"/>
    </location>
</feature>
<feature type="sequence variant" id="VAR_063479" description="In dbSNP:rs141603172." evidence="10">
    <original>N</original>
    <variation>S</variation>
    <location>
        <position position="2151"/>
    </location>
</feature>
<feature type="sequence variant" id="VAR_063480" description="In RP25." evidence="10">
    <original>L</original>
    <variation>P</variation>
    <location>
        <position position="2189"/>
    </location>
</feature>
<feature type="sequence variant" id="VAR_063481" description="In RP25; uncertain significance; dbSNP:rs145623359." evidence="10 12">
    <original>S</original>
    <variation>L</variation>
    <location>
        <position position="2211"/>
    </location>
</feature>
<feature type="sequence variant" id="VAR_063482" description="In dbSNP:rs4710457." evidence="10">
    <original>R</original>
    <variation>Q</variation>
    <location>
        <position position="2326"/>
    </location>
</feature>
<feature type="sequence variant" id="VAR_064419" description="In RP25; dbSNP:rs768964978." evidence="12">
    <original>E</original>
    <variation>K</variation>
    <location>
        <position position="2503"/>
    </location>
</feature>
<feature type="sequence variant" id="VAR_063483" description="In dbSNP:rs66462731." evidence="10 12">
    <original>S</original>
    <variation>C</variation>
    <location>
        <position position="2556"/>
    </location>
</feature>
<feature type="sequence variant" id="VAR_063484" description="In dbSNP:rs74636274." evidence="10">
    <original>H</original>
    <variation>R</variation>
    <location>
        <position position="2599"/>
    </location>
</feature>
<feature type="sequence variant" id="VAR_063485" description="In dbSNP:rs1250317776." evidence="10">
    <original>A</original>
    <variation>P</variation>
    <location>
        <position position="2757"/>
    </location>
</feature>
<feature type="sequence variant" id="VAR_063486" description="In RP25; dbSNP:rs111991705." evidence="10">
    <original>A</original>
    <variation>T</variation>
    <location>
        <position position="2829"/>
    </location>
</feature>
<feature type="sequence variant" id="VAR_063487" description="In dbSNP:rs144513453." evidence="10">
    <original>T</original>
    <variation>I</variation>
    <location>
        <position position="2831"/>
    </location>
</feature>
<feature type="sequence variant" id="VAR_063488" description="In RP25." evidence="10">
    <original>C</original>
    <variation>Y</variation>
    <location>
        <position position="2911"/>
    </location>
</feature>
<feature type="sequence variant" id="VAR_063489" description="In RP25; dbSNP:rs2149624796." evidence="10">
    <original>G</original>
    <variation>E</variation>
    <location>
        <position position="2928"/>
    </location>
</feature>
<feature type="sequence variant" id="VAR_064420" description="In RP25." evidence="12">
    <original>Q</original>
    <variation>E</variation>
    <location>
        <position position="2945"/>
    </location>
</feature>
<feature type="sequence conflict" description="In Ref. 1; CAR64275." evidence="20" ref="1">
    <original>C</original>
    <variation>R</variation>
    <location>
        <position position="652"/>
    </location>
</feature>
<feature type="sequence conflict" description="In Ref. 1; CAR64275." evidence="20" ref="1">
    <original>C</original>
    <variation>Y</variation>
    <location>
        <position position="1056"/>
    </location>
</feature>
<feature type="sequence conflict" description="In Ref. 1; CAR64275." evidence="20" ref="1">
    <original>Y</original>
    <variation>H</variation>
    <location>
        <position position="1183"/>
    </location>
</feature>
<feature type="sequence conflict" description="In Ref. 1; CAR64275." evidence="20" ref="1">
    <original>Y</original>
    <variation>H</variation>
    <location>
        <position position="1922"/>
    </location>
</feature>
<feature type="sequence conflict" description="In Ref. 1; CAR64275." evidence="20" ref="1">
    <original>H</original>
    <variation>R</variation>
    <location>
        <position position="2441"/>
    </location>
</feature>
<feature type="sequence conflict" description="In Ref. 1; CAR64275." evidence="20" ref="1">
    <original>G</original>
    <variation>E</variation>
    <location>
        <position position="2466"/>
    </location>
</feature>